<sequence length="403" mass="44983">MATTAGLRDAAAPLEKIPLETYVPPAKPSLIGLSRAELAARLGDIGVPERQQKMRVQQLWHWLYFRGARSFDEMTSVSKDTRNGLAERFTVDRPEVVAEQISNDGTRKWLLRLPSGDDLQKAHEVECVYIPETDRGTLCVSSQVGCTLNCAFCHTGTQRLVRNLTAGEIVGQIMVARDRLNDWADRETPHGNRLITNIVMMGMGEPLYNFEAVRDALLIVSDNEGIGISRRRITLSTSGVVPNIKRAGEEIGVMLAISLHAVRDELRNELVPLNRKYPIAELLQACRDYPGASNARRITFEYVMLKGVNDSLDDARLLVKLLKGIPAKINLIPFNPWPGSAYECSDWEQIEKFSEYVFNAGYSSPVRTPRGRDILAACGQLKSETEKLSARERQALRAMAMTD</sequence>
<keyword id="KW-0004">4Fe-4S</keyword>
<keyword id="KW-0963">Cytoplasm</keyword>
<keyword id="KW-1015">Disulfide bond</keyword>
<keyword id="KW-0408">Iron</keyword>
<keyword id="KW-0411">Iron-sulfur</keyword>
<keyword id="KW-0479">Metal-binding</keyword>
<keyword id="KW-0489">Methyltransferase</keyword>
<keyword id="KW-1185">Reference proteome</keyword>
<keyword id="KW-0698">rRNA processing</keyword>
<keyword id="KW-0949">S-adenosyl-L-methionine</keyword>
<keyword id="KW-0808">Transferase</keyword>
<keyword id="KW-0819">tRNA processing</keyword>
<comment type="function">
    <text evidence="1">Specifically methylates position 2 of adenine 2503 in 23S rRNA and position 2 of adenine 37 in tRNAs. m2A2503 modification seems to play a crucial role in the proofreading step occurring at the peptidyl transferase center and thus would serve to optimize ribosomal fidelity.</text>
</comment>
<comment type="catalytic activity">
    <reaction evidence="1">
        <text>adenosine(2503) in 23S rRNA + 2 reduced [2Fe-2S]-[ferredoxin] + 2 S-adenosyl-L-methionine = 2-methyladenosine(2503) in 23S rRNA + 5'-deoxyadenosine + L-methionine + 2 oxidized [2Fe-2S]-[ferredoxin] + S-adenosyl-L-homocysteine</text>
        <dbReference type="Rhea" id="RHEA:42916"/>
        <dbReference type="Rhea" id="RHEA-COMP:10000"/>
        <dbReference type="Rhea" id="RHEA-COMP:10001"/>
        <dbReference type="Rhea" id="RHEA-COMP:10152"/>
        <dbReference type="Rhea" id="RHEA-COMP:10282"/>
        <dbReference type="ChEBI" id="CHEBI:17319"/>
        <dbReference type="ChEBI" id="CHEBI:33737"/>
        <dbReference type="ChEBI" id="CHEBI:33738"/>
        <dbReference type="ChEBI" id="CHEBI:57844"/>
        <dbReference type="ChEBI" id="CHEBI:57856"/>
        <dbReference type="ChEBI" id="CHEBI:59789"/>
        <dbReference type="ChEBI" id="CHEBI:74411"/>
        <dbReference type="ChEBI" id="CHEBI:74497"/>
        <dbReference type="EC" id="2.1.1.192"/>
    </reaction>
</comment>
<comment type="catalytic activity">
    <reaction evidence="1">
        <text>adenosine(37) in tRNA + 2 reduced [2Fe-2S]-[ferredoxin] + 2 S-adenosyl-L-methionine = 2-methyladenosine(37) in tRNA + 5'-deoxyadenosine + L-methionine + 2 oxidized [2Fe-2S]-[ferredoxin] + S-adenosyl-L-homocysteine</text>
        <dbReference type="Rhea" id="RHEA:43332"/>
        <dbReference type="Rhea" id="RHEA-COMP:10000"/>
        <dbReference type="Rhea" id="RHEA-COMP:10001"/>
        <dbReference type="Rhea" id="RHEA-COMP:10162"/>
        <dbReference type="Rhea" id="RHEA-COMP:10485"/>
        <dbReference type="ChEBI" id="CHEBI:17319"/>
        <dbReference type="ChEBI" id="CHEBI:33737"/>
        <dbReference type="ChEBI" id="CHEBI:33738"/>
        <dbReference type="ChEBI" id="CHEBI:57844"/>
        <dbReference type="ChEBI" id="CHEBI:57856"/>
        <dbReference type="ChEBI" id="CHEBI:59789"/>
        <dbReference type="ChEBI" id="CHEBI:74411"/>
        <dbReference type="ChEBI" id="CHEBI:74497"/>
        <dbReference type="EC" id="2.1.1.192"/>
    </reaction>
</comment>
<comment type="cofactor">
    <cofactor evidence="1">
        <name>[4Fe-4S] cluster</name>
        <dbReference type="ChEBI" id="CHEBI:49883"/>
    </cofactor>
    <text evidence="1">Binds 1 [4Fe-4S] cluster. The cluster is coordinated with 3 cysteines and an exchangeable S-adenosyl-L-methionine.</text>
</comment>
<comment type="subcellular location">
    <subcellularLocation>
        <location evidence="1">Cytoplasm</location>
    </subcellularLocation>
</comment>
<comment type="miscellaneous">
    <text evidence="1">Reaction proceeds by a ping-pong mechanism involving intermediate methylation of a conserved cysteine residue.</text>
</comment>
<comment type="similarity">
    <text evidence="1">Belongs to the radical SAM superfamily. RlmN family.</text>
</comment>
<accession>A4YJY2</accession>
<gene>
    <name evidence="1" type="primary">rlmN</name>
    <name type="ordered locus">BRADO0246</name>
</gene>
<protein>
    <recommendedName>
        <fullName evidence="1">Dual-specificity RNA methyltransferase RlmN</fullName>
        <ecNumber evidence="1">2.1.1.192</ecNumber>
    </recommendedName>
    <alternativeName>
        <fullName evidence="1">23S rRNA (adenine(2503)-C(2))-methyltransferase</fullName>
    </alternativeName>
    <alternativeName>
        <fullName evidence="1">23S rRNA m2A2503 methyltransferase</fullName>
    </alternativeName>
    <alternativeName>
        <fullName evidence="1">Ribosomal RNA large subunit methyltransferase N</fullName>
    </alternativeName>
    <alternativeName>
        <fullName evidence="1">tRNA (adenine(37)-C(2))-methyltransferase</fullName>
    </alternativeName>
    <alternativeName>
        <fullName evidence="1">tRNA m2A37 methyltransferase</fullName>
    </alternativeName>
</protein>
<reference key="1">
    <citation type="journal article" date="2007" name="Science">
        <title>Legumes symbioses: absence of nod genes in photosynthetic bradyrhizobia.</title>
        <authorList>
            <person name="Giraud E."/>
            <person name="Moulin L."/>
            <person name="Vallenet D."/>
            <person name="Barbe V."/>
            <person name="Cytryn E."/>
            <person name="Avarre J.-C."/>
            <person name="Jaubert M."/>
            <person name="Simon D."/>
            <person name="Cartieaux F."/>
            <person name="Prin Y."/>
            <person name="Bena G."/>
            <person name="Hannibal L."/>
            <person name="Fardoux J."/>
            <person name="Kojadinovic M."/>
            <person name="Vuillet L."/>
            <person name="Lajus A."/>
            <person name="Cruveiller S."/>
            <person name="Rouy Z."/>
            <person name="Mangenot S."/>
            <person name="Segurens B."/>
            <person name="Dossat C."/>
            <person name="Franck W.L."/>
            <person name="Chang W.-S."/>
            <person name="Saunders E."/>
            <person name="Bruce D."/>
            <person name="Richardson P."/>
            <person name="Normand P."/>
            <person name="Dreyfus B."/>
            <person name="Pignol D."/>
            <person name="Stacey G."/>
            <person name="Emerich D."/>
            <person name="Vermeglio A."/>
            <person name="Medigue C."/>
            <person name="Sadowsky M."/>
        </authorList>
    </citation>
    <scope>NUCLEOTIDE SEQUENCE [LARGE SCALE GENOMIC DNA]</scope>
    <source>
        <strain>ORS 278</strain>
    </source>
</reference>
<organism>
    <name type="scientific">Bradyrhizobium sp. (strain ORS 278)</name>
    <dbReference type="NCBI Taxonomy" id="114615"/>
    <lineage>
        <taxon>Bacteria</taxon>
        <taxon>Pseudomonadati</taxon>
        <taxon>Pseudomonadota</taxon>
        <taxon>Alphaproteobacteria</taxon>
        <taxon>Hyphomicrobiales</taxon>
        <taxon>Nitrobacteraceae</taxon>
        <taxon>Bradyrhizobium</taxon>
    </lineage>
</organism>
<proteinExistence type="inferred from homology"/>
<evidence type="ECO:0000255" key="1">
    <source>
        <dbReference type="HAMAP-Rule" id="MF_01849"/>
    </source>
</evidence>
<evidence type="ECO:0000255" key="2">
    <source>
        <dbReference type="PROSITE-ProRule" id="PRU01266"/>
    </source>
</evidence>
<name>RLMN_BRASO</name>
<dbReference type="EC" id="2.1.1.192" evidence="1"/>
<dbReference type="EMBL" id="CU234118">
    <property type="protein sequence ID" value="CAL74208.1"/>
    <property type="molecule type" value="Genomic_DNA"/>
</dbReference>
<dbReference type="RefSeq" id="WP_011923495.1">
    <property type="nucleotide sequence ID" value="NC_009445.1"/>
</dbReference>
<dbReference type="SMR" id="A4YJY2"/>
<dbReference type="STRING" id="114615.BRADO0246"/>
<dbReference type="KEGG" id="bra:BRADO0246"/>
<dbReference type="eggNOG" id="COG0820">
    <property type="taxonomic scope" value="Bacteria"/>
</dbReference>
<dbReference type="HOGENOM" id="CLU_029101_2_0_5"/>
<dbReference type="OrthoDB" id="9793973at2"/>
<dbReference type="Proteomes" id="UP000001994">
    <property type="component" value="Chromosome"/>
</dbReference>
<dbReference type="GO" id="GO:0005737">
    <property type="term" value="C:cytoplasm"/>
    <property type="evidence" value="ECO:0007669"/>
    <property type="project" value="UniProtKB-SubCell"/>
</dbReference>
<dbReference type="GO" id="GO:0051539">
    <property type="term" value="F:4 iron, 4 sulfur cluster binding"/>
    <property type="evidence" value="ECO:0007669"/>
    <property type="project" value="UniProtKB-UniRule"/>
</dbReference>
<dbReference type="GO" id="GO:0046872">
    <property type="term" value="F:metal ion binding"/>
    <property type="evidence" value="ECO:0007669"/>
    <property type="project" value="UniProtKB-KW"/>
</dbReference>
<dbReference type="GO" id="GO:0070040">
    <property type="term" value="F:rRNA (adenine(2503)-C2-)-methyltransferase activity"/>
    <property type="evidence" value="ECO:0007669"/>
    <property type="project" value="UniProtKB-UniRule"/>
</dbReference>
<dbReference type="GO" id="GO:0019843">
    <property type="term" value="F:rRNA binding"/>
    <property type="evidence" value="ECO:0007669"/>
    <property type="project" value="UniProtKB-UniRule"/>
</dbReference>
<dbReference type="GO" id="GO:0002935">
    <property type="term" value="F:tRNA (adenine(37)-C2)-methyltransferase activity"/>
    <property type="evidence" value="ECO:0007669"/>
    <property type="project" value="UniProtKB-UniRule"/>
</dbReference>
<dbReference type="GO" id="GO:0000049">
    <property type="term" value="F:tRNA binding"/>
    <property type="evidence" value="ECO:0007669"/>
    <property type="project" value="UniProtKB-UniRule"/>
</dbReference>
<dbReference type="GO" id="GO:0070475">
    <property type="term" value="P:rRNA base methylation"/>
    <property type="evidence" value="ECO:0007669"/>
    <property type="project" value="UniProtKB-UniRule"/>
</dbReference>
<dbReference type="GO" id="GO:0030488">
    <property type="term" value="P:tRNA methylation"/>
    <property type="evidence" value="ECO:0007669"/>
    <property type="project" value="UniProtKB-UniRule"/>
</dbReference>
<dbReference type="CDD" id="cd01335">
    <property type="entry name" value="Radical_SAM"/>
    <property type="match status" value="1"/>
</dbReference>
<dbReference type="FunFam" id="3.20.20.70:FF:000008">
    <property type="entry name" value="Dual-specificity RNA methyltransferase RlmN"/>
    <property type="match status" value="1"/>
</dbReference>
<dbReference type="Gene3D" id="1.10.150.530">
    <property type="match status" value="1"/>
</dbReference>
<dbReference type="Gene3D" id="3.20.20.70">
    <property type="entry name" value="Aldolase class I"/>
    <property type="match status" value="1"/>
</dbReference>
<dbReference type="HAMAP" id="MF_01849">
    <property type="entry name" value="RNA_methyltr_RlmN"/>
    <property type="match status" value="1"/>
</dbReference>
<dbReference type="InterPro" id="IPR013785">
    <property type="entry name" value="Aldolase_TIM"/>
</dbReference>
<dbReference type="InterPro" id="IPR006638">
    <property type="entry name" value="Elp3/MiaA/NifB-like_rSAM"/>
</dbReference>
<dbReference type="InterPro" id="IPR040072">
    <property type="entry name" value="Methyltransferase_A"/>
</dbReference>
<dbReference type="InterPro" id="IPR048641">
    <property type="entry name" value="RlmN_N"/>
</dbReference>
<dbReference type="InterPro" id="IPR027492">
    <property type="entry name" value="RNA_MTrfase_RlmN"/>
</dbReference>
<dbReference type="InterPro" id="IPR004383">
    <property type="entry name" value="rRNA_lsu_MTrfase_RlmN/Cfr"/>
</dbReference>
<dbReference type="InterPro" id="IPR007197">
    <property type="entry name" value="rSAM"/>
</dbReference>
<dbReference type="NCBIfam" id="TIGR00048">
    <property type="entry name" value="rRNA_mod_RlmN"/>
    <property type="match status" value="1"/>
</dbReference>
<dbReference type="PANTHER" id="PTHR30544">
    <property type="entry name" value="23S RRNA METHYLTRANSFERASE"/>
    <property type="match status" value="1"/>
</dbReference>
<dbReference type="PANTHER" id="PTHR30544:SF5">
    <property type="entry name" value="RADICAL SAM CORE DOMAIN-CONTAINING PROTEIN"/>
    <property type="match status" value="1"/>
</dbReference>
<dbReference type="Pfam" id="PF04055">
    <property type="entry name" value="Radical_SAM"/>
    <property type="match status" value="1"/>
</dbReference>
<dbReference type="Pfam" id="PF21016">
    <property type="entry name" value="RlmN_N"/>
    <property type="match status" value="1"/>
</dbReference>
<dbReference type="PIRSF" id="PIRSF006004">
    <property type="entry name" value="CHP00048"/>
    <property type="match status" value="1"/>
</dbReference>
<dbReference type="SFLD" id="SFLDF00275">
    <property type="entry name" value="adenosine_C2_methyltransferase"/>
    <property type="match status" value="1"/>
</dbReference>
<dbReference type="SFLD" id="SFLDG01062">
    <property type="entry name" value="methyltransferase_(Class_A)"/>
    <property type="match status" value="1"/>
</dbReference>
<dbReference type="SMART" id="SM00729">
    <property type="entry name" value="Elp3"/>
    <property type="match status" value="1"/>
</dbReference>
<dbReference type="SUPFAM" id="SSF102114">
    <property type="entry name" value="Radical SAM enzymes"/>
    <property type="match status" value="1"/>
</dbReference>
<dbReference type="PROSITE" id="PS51918">
    <property type="entry name" value="RADICAL_SAM"/>
    <property type="match status" value="1"/>
</dbReference>
<feature type="chain" id="PRO_0000350061" description="Dual-specificity RNA methyltransferase RlmN">
    <location>
        <begin position="1"/>
        <end position="403"/>
    </location>
</feature>
<feature type="domain" description="Radical SAM core" evidence="2">
    <location>
        <begin position="132"/>
        <end position="375"/>
    </location>
</feature>
<feature type="active site" description="Proton acceptor" evidence="1">
    <location>
        <position position="126"/>
    </location>
</feature>
<feature type="active site" description="S-methylcysteine intermediate" evidence="1">
    <location>
        <position position="378"/>
    </location>
</feature>
<feature type="binding site" evidence="1">
    <location>
        <position position="146"/>
    </location>
    <ligand>
        <name>[4Fe-4S] cluster</name>
        <dbReference type="ChEBI" id="CHEBI:49883"/>
        <note>4Fe-4S-S-AdoMet</note>
    </ligand>
</feature>
<feature type="binding site" evidence="1">
    <location>
        <position position="150"/>
    </location>
    <ligand>
        <name>[4Fe-4S] cluster</name>
        <dbReference type="ChEBI" id="CHEBI:49883"/>
        <note>4Fe-4S-S-AdoMet</note>
    </ligand>
</feature>
<feature type="binding site" evidence="1">
    <location>
        <position position="153"/>
    </location>
    <ligand>
        <name>[4Fe-4S] cluster</name>
        <dbReference type="ChEBI" id="CHEBI:49883"/>
        <note>4Fe-4S-S-AdoMet</note>
    </ligand>
</feature>
<feature type="binding site" evidence="1">
    <location>
        <begin position="204"/>
        <end position="205"/>
    </location>
    <ligand>
        <name>S-adenosyl-L-methionine</name>
        <dbReference type="ChEBI" id="CHEBI:59789"/>
    </ligand>
</feature>
<feature type="binding site" evidence="1">
    <location>
        <position position="236"/>
    </location>
    <ligand>
        <name>S-adenosyl-L-methionine</name>
        <dbReference type="ChEBI" id="CHEBI:59789"/>
    </ligand>
</feature>
<feature type="binding site" evidence="1">
    <location>
        <begin position="258"/>
        <end position="260"/>
    </location>
    <ligand>
        <name>S-adenosyl-L-methionine</name>
        <dbReference type="ChEBI" id="CHEBI:59789"/>
    </ligand>
</feature>
<feature type="binding site" evidence="1">
    <location>
        <position position="335"/>
    </location>
    <ligand>
        <name>S-adenosyl-L-methionine</name>
        <dbReference type="ChEBI" id="CHEBI:59789"/>
    </ligand>
</feature>
<feature type="disulfide bond" description="(transient)" evidence="1">
    <location>
        <begin position="139"/>
        <end position="378"/>
    </location>
</feature>